<keyword id="KW-0025">Alternative splicing</keyword>
<keyword id="KW-0067">ATP-binding</keyword>
<keyword id="KW-0203">Cytokinin biosynthesis</keyword>
<keyword id="KW-0963">Cytoplasm</keyword>
<keyword id="KW-0460">Magnesium</keyword>
<keyword id="KW-0547">Nucleotide-binding</keyword>
<keyword id="KW-1185">Reference proteome</keyword>
<keyword id="KW-0808">Transferase</keyword>
<keyword id="KW-0819">tRNA processing</keyword>
<comment type="function">
    <text evidence="3 5">Catalyzes the transfer of a dimethylallyl group onto the adenine at position 37 in tRNAs that read codons beginning with uridine, leading to the formation of N6-(dimethylallyl)adenosine (i(6)A). Involved in the cis-type cytokinin biosynthesis.</text>
</comment>
<comment type="catalytic activity">
    <reaction>
        <text>adenosine(37) in tRNA + dimethylallyl diphosphate = N(6)-dimethylallyladenosine(37) in tRNA + diphosphate</text>
        <dbReference type="Rhea" id="RHEA:26482"/>
        <dbReference type="Rhea" id="RHEA-COMP:10162"/>
        <dbReference type="Rhea" id="RHEA-COMP:10375"/>
        <dbReference type="ChEBI" id="CHEBI:33019"/>
        <dbReference type="ChEBI" id="CHEBI:57623"/>
        <dbReference type="ChEBI" id="CHEBI:74411"/>
        <dbReference type="ChEBI" id="CHEBI:74415"/>
        <dbReference type="EC" id="2.5.1.75"/>
    </reaction>
</comment>
<comment type="cofactor">
    <cofactor evidence="1">
        <name>Mg(2+)</name>
        <dbReference type="ChEBI" id="CHEBI:18420"/>
    </cofactor>
</comment>
<comment type="subcellular location">
    <subcellularLocation>
        <location evidence="1">Cytoplasm</location>
    </subcellularLocation>
</comment>
<comment type="alternative products">
    <event type="alternative splicing"/>
    <isoform>
        <id>Q9C5J6-1</id>
        <name>1</name>
        <sequence type="displayed"/>
    </isoform>
    <isoform>
        <id>Q9C5J6-2</id>
        <name>2</name>
        <sequence type="described" ref="VSP_038685"/>
    </isoform>
</comment>
<comment type="tissue specificity">
    <text evidence="4">Expressed ubiquitously, with highest expression in proliferating tissues.</text>
</comment>
<comment type="induction">
    <text evidence="4">Not regulated by cytokinin, auxin or nitrate.</text>
</comment>
<comment type="disruption phenotype">
    <text evidence="5">No visible phenotype, due the redundancy with IPT2. Often chlorotic.</text>
</comment>
<comment type="similarity">
    <text evidence="7">Belongs to the IPP transferase family.</text>
</comment>
<feature type="chain" id="PRO_0000391077" description="tRNA dimethylallyltransferase 9">
    <location>
        <begin position="1"/>
        <end position="463"/>
    </location>
</feature>
<feature type="region of interest" description="Interaction with substrate tRNA" evidence="1">
    <location>
        <begin position="82"/>
        <end position="85"/>
    </location>
</feature>
<feature type="binding site" evidence="2">
    <location>
        <begin position="57"/>
        <end position="64"/>
    </location>
    <ligand>
        <name>ATP</name>
        <dbReference type="ChEBI" id="CHEBI:30616"/>
    </ligand>
</feature>
<feature type="binding site" evidence="1">
    <location>
        <begin position="59"/>
        <end position="64"/>
    </location>
    <ligand>
        <name>substrate</name>
    </ligand>
</feature>
<feature type="site" description="Interaction with substrate tRNA" evidence="1">
    <location>
        <position position="148"/>
    </location>
</feature>
<feature type="splice variant" id="VSP_038685" description="In isoform 2." evidence="6">
    <location>
        <begin position="431"/>
        <end position="434"/>
    </location>
</feature>
<feature type="sequence conflict" description="In Ref. 5; AAM63091." evidence="7" ref="5">
    <original>V</original>
    <variation>L</variation>
    <location>
        <position position="121"/>
    </location>
</feature>
<sequence>MVIGSGVFLTRTCYLRLQPPSLVLRRRFCAATTACSVPLNGNKKKKSEKEKVIVISGPTGAGKSRLAMELAKRLNGEIISADSVQVYKGLDVGSAKPSDSDRKVVPHHLIDILHPSQDYSVGQFYDDGRQATKDILNRGRVPIVTGGTGLYLRWFMYGKPDVPKPSPEVIAEAHDMLVGFQTEYNWDAAVELVVNAGDPKASSLPRNDWYRLRRSLEILKSTGSPPSSFRIPYDSFRVNLVAPDADDFLEDGSSADISIQNIETDLDYDFLCFFLSSPRVALYRSIDFRCEDMLSGPNGVLSEARWLLDLGLLPNSNPATRAIGYRQAMEYLLQCRRYEGESSPREFYAFLNKFQTASRNFAKRQMTWFRCEPMYHWLNASKPLDSILQCIYDAYESEAEMVEIPESLRMSKDVRDSREASELKGYRSKNRHFVRREDCSSVLEWIRSEGCKSEASCVESAIA</sequence>
<dbReference type="EC" id="2.5.1.75"/>
<dbReference type="EMBL" id="AB062615">
    <property type="protein sequence ID" value="BAB59048.1"/>
    <property type="molecule type" value="mRNA"/>
</dbReference>
<dbReference type="EMBL" id="AF296836">
    <property type="status" value="NOT_ANNOTATED_CDS"/>
    <property type="molecule type" value="Genomic_DNA"/>
</dbReference>
<dbReference type="EMBL" id="CP002688">
    <property type="protein sequence ID" value="AED92782.1"/>
    <property type="molecule type" value="Genomic_DNA"/>
</dbReference>
<dbReference type="EMBL" id="CP002688">
    <property type="protein sequence ID" value="AED92783.1"/>
    <property type="molecule type" value="Genomic_DNA"/>
</dbReference>
<dbReference type="EMBL" id="AF360208">
    <property type="protein sequence ID" value="AAK25918.1"/>
    <property type="molecule type" value="mRNA"/>
</dbReference>
<dbReference type="EMBL" id="AY040056">
    <property type="protein sequence ID" value="AAK64114.1"/>
    <property type="molecule type" value="mRNA"/>
</dbReference>
<dbReference type="EMBL" id="AY085878">
    <property type="protein sequence ID" value="AAM63091.1"/>
    <property type="molecule type" value="mRNA"/>
</dbReference>
<dbReference type="RefSeq" id="NP_568390.2">
    <molecule id="Q9C5J6-2"/>
    <property type="nucleotide sequence ID" value="NM_122011.4"/>
</dbReference>
<dbReference type="RefSeq" id="NP_851043.1">
    <molecule id="Q9C5J6-1"/>
    <property type="nucleotide sequence ID" value="NM_180712.3"/>
</dbReference>
<dbReference type="SMR" id="Q9C5J6"/>
<dbReference type="FunCoup" id="Q9C5J6">
    <property type="interactions" value="277"/>
</dbReference>
<dbReference type="STRING" id="3702.Q9C5J6"/>
<dbReference type="PaxDb" id="3702-AT5G20040.3"/>
<dbReference type="ProteomicsDB" id="247041">
    <molecule id="Q9C5J6-1"/>
</dbReference>
<dbReference type="EnsemblPlants" id="AT5G20040.1">
    <molecule id="Q9C5J6-1"/>
    <property type="protein sequence ID" value="AT5G20040.1"/>
    <property type="gene ID" value="AT5G20040"/>
</dbReference>
<dbReference type="EnsemblPlants" id="AT5G20040.2">
    <molecule id="Q9C5J6-2"/>
    <property type="protein sequence ID" value="AT5G20040.2"/>
    <property type="gene ID" value="AT5G20040"/>
</dbReference>
<dbReference type="GeneID" id="832126"/>
<dbReference type="Gramene" id="AT5G20040.1">
    <molecule id="Q9C5J6-1"/>
    <property type="protein sequence ID" value="AT5G20040.1"/>
    <property type="gene ID" value="AT5G20040"/>
</dbReference>
<dbReference type="Gramene" id="AT5G20040.2">
    <molecule id="Q9C5J6-2"/>
    <property type="protein sequence ID" value="AT5G20040.2"/>
    <property type="gene ID" value="AT5G20040"/>
</dbReference>
<dbReference type="KEGG" id="ath:AT5G20040"/>
<dbReference type="Araport" id="AT5G20040"/>
<dbReference type="TAIR" id="AT5G20040">
    <property type="gene designation" value="IPT9"/>
</dbReference>
<dbReference type="eggNOG" id="KOG1384">
    <property type="taxonomic scope" value="Eukaryota"/>
</dbReference>
<dbReference type="InParanoid" id="Q9C5J6"/>
<dbReference type="OMA" id="YHWIDAS"/>
<dbReference type="OrthoDB" id="775260at2759"/>
<dbReference type="PhylomeDB" id="Q9C5J6"/>
<dbReference type="BioCyc" id="ARA:AT5G20040-MONOMER"/>
<dbReference type="PRO" id="PR:Q9C5J6"/>
<dbReference type="Proteomes" id="UP000006548">
    <property type="component" value="Chromosome 5"/>
</dbReference>
<dbReference type="ExpressionAtlas" id="Q9C5J6">
    <property type="expression patterns" value="baseline and differential"/>
</dbReference>
<dbReference type="GO" id="GO:0005737">
    <property type="term" value="C:cytoplasm"/>
    <property type="evidence" value="ECO:0007669"/>
    <property type="project" value="UniProtKB-SubCell"/>
</dbReference>
<dbReference type="GO" id="GO:0005524">
    <property type="term" value="F:ATP binding"/>
    <property type="evidence" value="ECO:0007669"/>
    <property type="project" value="UniProtKB-KW"/>
</dbReference>
<dbReference type="GO" id="GO:0052381">
    <property type="term" value="F:tRNA dimethylallyltransferase activity"/>
    <property type="evidence" value="ECO:0007669"/>
    <property type="project" value="UniProtKB-EC"/>
</dbReference>
<dbReference type="GO" id="GO:0009691">
    <property type="term" value="P:cytokinin biosynthetic process"/>
    <property type="evidence" value="ECO:0007669"/>
    <property type="project" value="UniProtKB-KW"/>
</dbReference>
<dbReference type="GO" id="GO:0008033">
    <property type="term" value="P:tRNA processing"/>
    <property type="evidence" value="ECO:0007669"/>
    <property type="project" value="UniProtKB-KW"/>
</dbReference>
<dbReference type="FunFam" id="1.10.20.140:FF:000007">
    <property type="entry name" value="tRNA dimethylallyltransferase 9"/>
    <property type="match status" value="1"/>
</dbReference>
<dbReference type="Gene3D" id="1.10.20.140">
    <property type="match status" value="1"/>
</dbReference>
<dbReference type="Gene3D" id="3.40.50.300">
    <property type="entry name" value="P-loop containing nucleotide triphosphate hydrolases"/>
    <property type="match status" value="1"/>
</dbReference>
<dbReference type="HAMAP" id="MF_00185">
    <property type="entry name" value="IPP_trans"/>
    <property type="match status" value="1"/>
</dbReference>
<dbReference type="InterPro" id="IPR039657">
    <property type="entry name" value="Dimethylallyltransferase"/>
</dbReference>
<dbReference type="InterPro" id="IPR018022">
    <property type="entry name" value="IPT"/>
</dbReference>
<dbReference type="InterPro" id="IPR027417">
    <property type="entry name" value="P-loop_NTPase"/>
</dbReference>
<dbReference type="NCBIfam" id="TIGR00174">
    <property type="entry name" value="miaA"/>
    <property type="match status" value="1"/>
</dbReference>
<dbReference type="PANTHER" id="PTHR11088">
    <property type="entry name" value="TRNA DIMETHYLALLYLTRANSFERASE"/>
    <property type="match status" value="1"/>
</dbReference>
<dbReference type="PANTHER" id="PTHR11088:SF60">
    <property type="entry name" value="TRNA DIMETHYLALLYLTRANSFERASE"/>
    <property type="match status" value="1"/>
</dbReference>
<dbReference type="Pfam" id="PF01715">
    <property type="entry name" value="IPPT"/>
    <property type="match status" value="1"/>
</dbReference>
<dbReference type="SUPFAM" id="SSF52540">
    <property type="entry name" value="P-loop containing nucleoside triphosphate hydrolases"/>
    <property type="match status" value="1"/>
</dbReference>
<organism>
    <name type="scientific">Arabidopsis thaliana</name>
    <name type="common">Mouse-ear cress</name>
    <dbReference type="NCBI Taxonomy" id="3702"/>
    <lineage>
        <taxon>Eukaryota</taxon>
        <taxon>Viridiplantae</taxon>
        <taxon>Streptophyta</taxon>
        <taxon>Embryophyta</taxon>
        <taxon>Tracheophyta</taxon>
        <taxon>Spermatophyta</taxon>
        <taxon>Magnoliopsida</taxon>
        <taxon>eudicotyledons</taxon>
        <taxon>Gunneridae</taxon>
        <taxon>Pentapetalae</taxon>
        <taxon>rosids</taxon>
        <taxon>malvids</taxon>
        <taxon>Brassicales</taxon>
        <taxon>Brassicaceae</taxon>
        <taxon>Camelineae</taxon>
        <taxon>Arabidopsis</taxon>
    </lineage>
</organism>
<gene>
    <name type="primary">IPT9</name>
    <name type="ordered locus">At5g20040</name>
    <name type="ORF">F28I16.190</name>
</gene>
<proteinExistence type="evidence at transcript level"/>
<name>IPT9_ARATH</name>
<accession>Q9C5J6</accession>
<accession>Q8LDP3</accession>
<accession>Q94IC8</accession>
<protein>
    <recommendedName>
        <fullName>tRNA dimethylallyltransferase 9</fullName>
        <ecNumber>2.5.1.75</ecNumber>
    </recommendedName>
    <alternativeName>
        <fullName>Isopentenyl-diphosphate: tRNA isopentenyltransferase 9</fullName>
        <shortName>AtIPT9</shortName>
        <shortName>IPP transferase 9</shortName>
        <shortName>IPPT 9</shortName>
    </alternativeName>
</protein>
<reference key="1">
    <citation type="journal article" date="2001" name="J. Biol. Chem.">
        <title>Identification of genes encoding adenylate isopentenyltransferase, a cytokinin biosynthesis enzyme, in Arabidopsis thaliana.</title>
        <authorList>
            <person name="Takei K."/>
            <person name="Sakakibara H."/>
            <person name="Sugiyama T."/>
        </authorList>
    </citation>
    <scope>NUCLEOTIDE SEQUENCE [MRNA] (ISOFORM 2)</scope>
    <scope>FUNCTION</scope>
    <scope>GENE FAMILY</scope>
    <source>
        <strain>cv. Columbia</strain>
    </source>
</reference>
<reference key="2">
    <citation type="journal article" date="2000" name="Nature">
        <title>Sequence and analysis of chromosome 5 of the plant Arabidopsis thaliana.</title>
        <authorList>
            <person name="Tabata S."/>
            <person name="Kaneko T."/>
            <person name="Nakamura Y."/>
            <person name="Kotani H."/>
            <person name="Kato T."/>
            <person name="Asamizu E."/>
            <person name="Miyajima N."/>
            <person name="Sasamoto S."/>
            <person name="Kimura T."/>
            <person name="Hosouchi T."/>
            <person name="Kawashima K."/>
            <person name="Kohara M."/>
            <person name="Matsumoto M."/>
            <person name="Matsuno A."/>
            <person name="Muraki A."/>
            <person name="Nakayama S."/>
            <person name="Nakazaki N."/>
            <person name="Naruo K."/>
            <person name="Okumura S."/>
            <person name="Shinpo S."/>
            <person name="Takeuchi C."/>
            <person name="Wada T."/>
            <person name="Watanabe A."/>
            <person name="Yamada M."/>
            <person name="Yasuda M."/>
            <person name="Sato S."/>
            <person name="de la Bastide M."/>
            <person name="Huang E."/>
            <person name="Spiegel L."/>
            <person name="Gnoj L."/>
            <person name="O'Shaughnessy A."/>
            <person name="Preston R."/>
            <person name="Habermann K."/>
            <person name="Murray J."/>
            <person name="Johnson D."/>
            <person name="Rohlfing T."/>
            <person name="Nelson J."/>
            <person name="Stoneking T."/>
            <person name="Pepin K."/>
            <person name="Spieth J."/>
            <person name="Sekhon M."/>
            <person name="Armstrong J."/>
            <person name="Becker M."/>
            <person name="Belter E."/>
            <person name="Cordum H."/>
            <person name="Cordes M."/>
            <person name="Courtney L."/>
            <person name="Courtney W."/>
            <person name="Dante M."/>
            <person name="Du H."/>
            <person name="Edwards J."/>
            <person name="Fryman J."/>
            <person name="Haakensen B."/>
            <person name="Lamar E."/>
            <person name="Latreille P."/>
            <person name="Leonard S."/>
            <person name="Meyer R."/>
            <person name="Mulvaney E."/>
            <person name="Ozersky P."/>
            <person name="Riley A."/>
            <person name="Strowmatt C."/>
            <person name="Wagner-McPherson C."/>
            <person name="Wollam A."/>
            <person name="Yoakum M."/>
            <person name="Bell M."/>
            <person name="Dedhia N."/>
            <person name="Parnell L."/>
            <person name="Shah R."/>
            <person name="Rodriguez M."/>
            <person name="Hoon See L."/>
            <person name="Vil D."/>
            <person name="Baker J."/>
            <person name="Kirchoff K."/>
            <person name="Toth K."/>
            <person name="King L."/>
            <person name="Bahret A."/>
            <person name="Miller B."/>
            <person name="Marra M.A."/>
            <person name="Martienssen R."/>
            <person name="McCombie W.R."/>
            <person name="Wilson R.K."/>
            <person name="Murphy G."/>
            <person name="Bancroft I."/>
            <person name="Volckaert G."/>
            <person name="Wambutt R."/>
            <person name="Duesterhoeft A."/>
            <person name="Stiekema W."/>
            <person name="Pohl T."/>
            <person name="Entian K.-D."/>
            <person name="Terryn N."/>
            <person name="Hartley N."/>
            <person name="Bent E."/>
            <person name="Johnson S."/>
            <person name="Langham S.-A."/>
            <person name="McCullagh B."/>
            <person name="Robben J."/>
            <person name="Grymonprez B."/>
            <person name="Zimmermann W."/>
            <person name="Ramsperger U."/>
            <person name="Wedler H."/>
            <person name="Balke K."/>
            <person name="Wedler E."/>
            <person name="Peters S."/>
            <person name="van Staveren M."/>
            <person name="Dirkse W."/>
            <person name="Mooijman P."/>
            <person name="Klein Lankhorst R."/>
            <person name="Weitzenegger T."/>
            <person name="Bothe G."/>
            <person name="Rose M."/>
            <person name="Hauf J."/>
            <person name="Berneiser S."/>
            <person name="Hempel S."/>
            <person name="Feldpausch M."/>
            <person name="Lamberth S."/>
            <person name="Villarroel R."/>
            <person name="Gielen J."/>
            <person name="Ardiles W."/>
            <person name="Bents O."/>
            <person name="Lemcke K."/>
            <person name="Kolesov G."/>
            <person name="Mayer K.F.X."/>
            <person name="Rudd S."/>
            <person name="Schoof H."/>
            <person name="Schueller C."/>
            <person name="Zaccaria P."/>
            <person name="Mewes H.-W."/>
            <person name="Bevan M."/>
            <person name="Fransz P.F."/>
        </authorList>
    </citation>
    <scope>NUCLEOTIDE SEQUENCE [LARGE SCALE GENOMIC DNA]</scope>
    <source>
        <strain>cv. Columbia</strain>
    </source>
</reference>
<reference key="3">
    <citation type="journal article" date="2017" name="Plant J.">
        <title>Araport11: a complete reannotation of the Arabidopsis thaliana reference genome.</title>
        <authorList>
            <person name="Cheng C.Y."/>
            <person name="Krishnakumar V."/>
            <person name="Chan A.P."/>
            <person name="Thibaud-Nissen F."/>
            <person name="Schobel S."/>
            <person name="Town C.D."/>
        </authorList>
    </citation>
    <scope>GENOME REANNOTATION</scope>
    <source>
        <strain>cv. Columbia</strain>
    </source>
</reference>
<reference key="4">
    <citation type="journal article" date="2003" name="Science">
        <title>Empirical analysis of transcriptional activity in the Arabidopsis genome.</title>
        <authorList>
            <person name="Yamada K."/>
            <person name="Lim J."/>
            <person name="Dale J.M."/>
            <person name="Chen H."/>
            <person name="Shinn P."/>
            <person name="Palm C.J."/>
            <person name="Southwick A.M."/>
            <person name="Wu H.C."/>
            <person name="Kim C.J."/>
            <person name="Nguyen M."/>
            <person name="Pham P.K."/>
            <person name="Cheuk R.F."/>
            <person name="Karlin-Newmann G."/>
            <person name="Liu S.X."/>
            <person name="Lam B."/>
            <person name="Sakano H."/>
            <person name="Wu T."/>
            <person name="Yu G."/>
            <person name="Miranda M."/>
            <person name="Quach H.L."/>
            <person name="Tripp M."/>
            <person name="Chang C.H."/>
            <person name="Lee J.M."/>
            <person name="Toriumi M.J."/>
            <person name="Chan M.M."/>
            <person name="Tang C.C."/>
            <person name="Onodera C.S."/>
            <person name="Deng J.M."/>
            <person name="Akiyama K."/>
            <person name="Ansari Y."/>
            <person name="Arakawa T."/>
            <person name="Banh J."/>
            <person name="Banno F."/>
            <person name="Bowser L."/>
            <person name="Brooks S.Y."/>
            <person name="Carninci P."/>
            <person name="Chao Q."/>
            <person name="Choy N."/>
            <person name="Enju A."/>
            <person name="Goldsmith A.D."/>
            <person name="Gurjal M."/>
            <person name="Hansen N.F."/>
            <person name="Hayashizaki Y."/>
            <person name="Johnson-Hopson C."/>
            <person name="Hsuan V.W."/>
            <person name="Iida K."/>
            <person name="Karnes M."/>
            <person name="Khan S."/>
            <person name="Koesema E."/>
            <person name="Ishida J."/>
            <person name="Jiang P.X."/>
            <person name="Jones T."/>
            <person name="Kawai J."/>
            <person name="Kamiya A."/>
            <person name="Meyers C."/>
            <person name="Nakajima M."/>
            <person name="Narusaka M."/>
            <person name="Seki M."/>
            <person name="Sakurai T."/>
            <person name="Satou M."/>
            <person name="Tamse R."/>
            <person name="Vaysberg M."/>
            <person name="Wallender E.K."/>
            <person name="Wong C."/>
            <person name="Yamamura Y."/>
            <person name="Yuan S."/>
            <person name="Shinozaki K."/>
            <person name="Davis R.W."/>
            <person name="Theologis A."/>
            <person name="Ecker J.R."/>
        </authorList>
    </citation>
    <scope>NUCLEOTIDE SEQUENCE [LARGE SCALE MRNA] (ISOFORM 1)</scope>
    <source>
        <strain>cv. Columbia</strain>
    </source>
</reference>
<reference key="5">
    <citation type="submission" date="2002-03" db="EMBL/GenBank/DDBJ databases">
        <title>Full-length cDNA from Arabidopsis thaliana.</title>
        <authorList>
            <person name="Brover V.V."/>
            <person name="Troukhan M.E."/>
            <person name="Alexandrov N.A."/>
            <person name="Lu Y.-P."/>
            <person name="Flavell R.B."/>
            <person name="Feldmann K.A."/>
        </authorList>
    </citation>
    <scope>NUCLEOTIDE SEQUENCE [LARGE SCALE MRNA]</scope>
</reference>
<reference key="6">
    <citation type="journal article" date="2001" name="Plant Cell Physiol.">
        <title>Identification of plant cytokinin biosynthetic enzymes as dimethylallyl diphosphate:ATP/ADP isopentenyltransferases.</title>
        <authorList>
            <person name="Kakimoto T."/>
        </authorList>
    </citation>
    <scope>GENE FAMILY</scope>
    <source>
        <strain>cv. Wassilewskija</strain>
    </source>
</reference>
<reference key="7">
    <citation type="journal article" date="2004" name="Plant J.">
        <title>Expression of cytokinin biosynthetic isopentenyltransferase genes in Arabidopsis: tissue specificity and regulation by auxin, cytokinin, and nitrate.</title>
        <authorList>
            <person name="Miyawaki K."/>
            <person name="Matsumoto-Kitano M."/>
            <person name="Kakimoto T."/>
        </authorList>
    </citation>
    <scope>TISSUE SPECIFICITY</scope>
    <scope>INDUCTION</scope>
</reference>
<reference key="8">
    <citation type="journal article" date="2006" name="Proc. Natl. Acad. Sci. U.S.A.">
        <title>Roles of Arabidopsis ATP/ADP isopentenyltransferases and tRNA isopentenyltransferases in cytokinin biosynthesis.</title>
        <authorList>
            <person name="Miyawaki K."/>
            <person name="Tarkowski P."/>
            <person name="Matsumoto-Kitano M."/>
            <person name="Kato T."/>
            <person name="Sato S."/>
            <person name="Tarkowska D."/>
            <person name="Tabata S."/>
            <person name="Sandberg G."/>
            <person name="Kakimoto T."/>
        </authorList>
    </citation>
    <scope>FUNCTION</scope>
    <scope>DISRUPTION PHENOTYPE</scope>
</reference>
<evidence type="ECO:0000250" key="1"/>
<evidence type="ECO:0000255" key="2"/>
<evidence type="ECO:0000269" key="3">
    <source>
    </source>
</evidence>
<evidence type="ECO:0000269" key="4">
    <source>
    </source>
</evidence>
<evidence type="ECO:0000269" key="5">
    <source>
    </source>
</evidence>
<evidence type="ECO:0000303" key="6">
    <source>
    </source>
</evidence>
<evidence type="ECO:0000305" key="7"/>